<keyword id="KW-1015">Disulfide bond</keyword>
<keyword id="KW-0378">Hydrolase</keyword>
<keyword id="KW-1185">Reference proteome</keyword>
<keyword id="KW-0964">Secreted</keyword>
<keyword id="KW-0719">Serine esterase</keyword>
<keyword id="KW-0732">Signal</keyword>
<accession>B6HLS9</accession>
<dbReference type="EC" id="3.1.1.74" evidence="4"/>
<dbReference type="EMBL" id="AM920436">
    <property type="protein sequence ID" value="CAP97019.1"/>
    <property type="molecule type" value="Genomic_DNA"/>
</dbReference>
<dbReference type="RefSeq" id="XP_002569102.1">
    <property type="nucleotide sequence ID" value="XM_002569056.1"/>
</dbReference>
<dbReference type="SMR" id="B6HLS9"/>
<dbReference type="STRING" id="500485.B6HLS9"/>
<dbReference type="ESTHER" id="pencw-cuti1">
    <property type="family name" value="Cutinase"/>
</dbReference>
<dbReference type="VEuPathDB" id="FungiDB:PCH_Pc21g21220"/>
<dbReference type="eggNOG" id="ENOG502SI38">
    <property type="taxonomic scope" value="Eukaryota"/>
</dbReference>
<dbReference type="HOGENOM" id="CLU_040058_2_0_1"/>
<dbReference type="OMA" id="ACKPITF"/>
<dbReference type="OrthoDB" id="3225429at2759"/>
<dbReference type="BioCyc" id="PCHR:PC21G21220-MONOMER"/>
<dbReference type="Proteomes" id="UP000000724">
    <property type="component" value="Contig Pc00c21"/>
</dbReference>
<dbReference type="GO" id="GO:0005576">
    <property type="term" value="C:extracellular region"/>
    <property type="evidence" value="ECO:0007669"/>
    <property type="project" value="UniProtKB-SubCell"/>
</dbReference>
<dbReference type="GO" id="GO:0050525">
    <property type="term" value="F:cutinase activity"/>
    <property type="evidence" value="ECO:0000250"/>
    <property type="project" value="UniProtKB"/>
</dbReference>
<dbReference type="GO" id="GO:0017000">
    <property type="term" value="P:antibiotic biosynthetic process"/>
    <property type="evidence" value="ECO:0007669"/>
    <property type="project" value="UniProtKB-ARBA"/>
</dbReference>
<dbReference type="GO" id="GO:0016052">
    <property type="term" value="P:carbohydrate catabolic process"/>
    <property type="evidence" value="ECO:0007669"/>
    <property type="project" value="TreeGrafter"/>
</dbReference>
<dbReference type="GO" id="GO:0072330">
    <property type="term" value="P:monocarboxylic acid biosynthetic process"/>
    <property type="evidence" value="ECO:0007669"/>
    <property type="project" value="UniProtKB-ARBA"/>
</dbReference>
<dbReference type="FunFam" id="3.40.50.1820:FF:000235">
    <property type="entry name" value="Cutinase 1"/>
    <property type="match status" value="1"/>
</dbReference>
<dbReference type="Gene3D" id="3.40.50.1820">
    <property type="entry name" value="alpha/beta hydrolase"/>
    <property type="match status" value="1"/>
</dbReference>
<dbReference type="InterPro" id="IPR029058">
    <property type="entry name" value="AB_hydrolase_fold"/>
</dbReference>
<dbReference type="InterPro" id="IPR000675">
    <property type="entry name" value="Cutinase/axe"/>
</dbReference>
<dbReference type="InterPro" id="IPR043579">
    <property type="entry name" value="CUTINASE_2"/>
</dbReference>
<dbReference type="InterPro" id="IPR011150">
    <property type="entry name" value="Cutinase_monf"/>
</dbReference>
<dbReference type="PANTHER" id="PTHR48250:SF3">
    <property type="entry name" value="CUTINASE 1-RELATED"/>
    <property type="match status" value="1"/>
</dbReference>
<dbReference type="PANTHER" id="PTHR48250">
    <property type="entry name" value="CUTINASE 2-RELATED"/>
    <property type="match status" value="1"/>
</dbReference>
<dbReference type="Pfam" id="PF01083">
    <property type="entry name" value="Cutinase"/>
    <property type="match status" value="1"/>
</dbReference>
<dbReference type="PRINTS" id="PR00129">
    <property type="entry name" value="CUTINASE"/>
</dbReference>
<dbReference type="SMART" id="SM01110">
    <property type="entry name" value="Cutinase"/>
    <property type="match status" value="1"/>
</dbReference>
<dbReference type="SUPFAM" id="SSF53474">
    <property type="entry name" value="alpha/beta-Hydrolases"/>
    <property type="match status" value="1"/>
</dbReference>
<dbReference type="PROSITE" id="PS00931">
    <property type="entry name" value="CUTINASE_2"/>
    <property type="match status" value="1"/>
</dbReference>
<gene>
    <name type="ORF">Pc21g21220</name>
</gene>
<name>CUTI1_PENRW</name>
<comment type="function">
    <text evidence="1">Catalyzes the hydrolysis of complex carboxylic polyesters found in the cell wall of plants (By similarity). Degrades cutin, a macromolecule that forms the structure of the plant cuticle (By similarity).</text>
</comment>
<comment type="catalytic activity">
    <reaction evidence="4">
        <text>cutin + H2O = cutin monomers.</text>
        <dbReference type="EC" id="3.1.1.74"/>
    </reaction>
</comment>
<comment type="subcellular location">
    <subcellularLocation>
        <location evidence="2">Secreted</location>
    </subcellularLocation>
</comment>
<comment type="PTM">
    <text evidence="2">The 2 disulfide bonds play a critical role in holding the catalytic residues in juxta-position; reduction of the disulfide bridges results in the complete inactivation of the enzyme.</text>
</comment>
<comment type="similarity">
    <text evidence="5">Belongs to the cutinase family.</text>
</comment>
<sequence>MKFSLLALALATAAFASPMDIDARALSEGNELRNGDCKDITFIFARASTEPGLLILTHPNDRMSKPGKVACQGVGPKYTADLPSNALPGNTSPAAIAEAQGLFEQAAKKCPDTQILAGGYSQGTAVMDGSIKKLSSDVQAKIKGVALFGYTRNAQERGQIQGFDKDKTKIYCAVGDMVCQGTLVITAAHFTYVADAGAATRWLVSKLD</sequence>
<evidence type="ECO:0000250" key="1">
    <source>
        <dbReference type="UniProtKB" id="P00590"/>
    </source>
</evidence>
<evidence type="ECO:0000250" key="2">
    <source>
        <dbReference type="UniProtKB" id="P11373"/>
    </source>
</evidence>
<evidence type="ECO:0000255" key="3"/>
<evidence type="ECO:0000255" key="4">
    <source>
        <dbReference type="PROSITE-ProRule" id="PRU10109"/>
    </source>
</evidence>
<evidence type="ECO:0000305" key="5"/>
<feature type="signal peptide" evidence="3">
    <location>
        <begin position="1"/>
        <end position="16"/>
    </location>
</feature>
<feature type="chain" id="PRO_5000409922" description="Probable cutinase 1">
    <location>
        <begin position="17"/>
        <end position="208"/>
    </location>
</feature>
<feature type="active site" description="Nucleophile" evidence="4">
    <location>
        <position position="121"/>
    </location>
</feature>
<feature type="active site" evidence="4">
    <location>
        <position position="176"/>
    </location>
</feature>
<feature type="active site" description="Proton donor/acceptor" evidence="4">
    <location>
        <position position="189"/>
    </location>
</feature>
<feature type="site" description="Transition state stabilizer" evidence="1">
    <location>
        <position position="48"/>
    </location>
</feature>
<feature type="site" description="Transition state stabilizer" evidence="1">
    <location>
        <position position="122"/>
    </location>
</feature>
<feature type="disulfide bond" evidence="1">
    <location>
        <begin position="37"/>
        <end position="110"/>
    </location>
</feature>
<feature type="disulfide bond" evidence="1">
    <location>
        <begin position="172"/>
        <end position="179"/>
    </location>
</feature>
<organism>
    <name type="scientific">Penicillium rubens (strain ATCC 28089 / DSM 1075 / NRRL 1951 / Wisconsin 54-1255)</name>
    <name type="common">Penicillium chrysogenum</name>
    <dbReference type="NCBI Taxonomy" id="500485"/>
    <lineage>
        <taxon>Eukaryota</taxon>
        <taxon>Fungi</taxon>
        <taxon>Dikarya</taxon>
        <taxon>Ascomycota</taxon>
        <taxon>Pezizomycotina</taxon>
        <taxon>Eurotiomycetes</taxon>
        <taxon>Eurotiomycetidae</taxon>
        <taxon>Eurotiales</taxon>
        <taxon>Aspergillaceae</taxon>
        <taxon>Penicillium</taxon>
        <taxon>Penicillium chrysogenum species complex</taxon>
    </lineage>
</organism>
<proteinExistence type="inferred from homology"/>
<reference key="1">
    <citation type="journal article" date="2008" name="Nat. Biotechnol.">
        <title>Genome sequencing and analysis of the filamentous fungus Penicillium chrysogenum.</title>
        <authorList>
            <person name="van den Berg M.A."/>
            <person name="Albang R."/>
            <person name="Albermann K."/>
            <person name="Badger J.H."/>
            <person name="Daran J.-M."/>
            <person name="Driessen A.J.M."/>
            <person name="Garcia-Estrada C."/>
            <person name="Fedorova N.D."/>
            <person name="Harris D.M."/>
            <person name="Heijne W.H.M."/>
            <person name="Joardar V.S."/>
            <person name="Kiel J.A.K.W."/>
            <person name="Kovalchuk A."/>
            <person name="Martin J.F."/>
            <person name="Nierman W.C."/>
            <person name="Nijland J.G."/>
            <person name="Pronk J.T."/>
            <person name="Roubos J.A."/>
            <person name="van der Klei I.J."/>
            <person name="van Peij N.N.M.E."/>
            <person name="Veenhuis M."/>
            <person name="von Doehren H."/>
            <person name="Wagner C."/>
            <person name="Wortman J.R."/>
            <person name="Bovenberg R.A.L."/>
        </authorList>
    </citation>
    <scope>NUCLEOTIDE SEQUENCE [LARGE SCALE GENOMIC DNA]</scope>
    <source>
        <strain>ATCC 28089 / DSM 1075 / NRRL 1951 / Wisconsin 54-1255</strain>
    </source>
</reference>
<protein>
    <recommendedName>
        <fullName>Probable cutinase 1</fullName>
        <ecNumber evidence="4">3.1.1.74</ecNumber>
    </recommendedName>
    <alternativeName>
        <fullName>Cutin hydrolase 1</fullName>
    </alternativeName>
</protein>